<accession>Q57TP3</accession>
<proteinExistence type="inferred from homology"/>
<dbReference type="EMBL" id="AE017220">
    <property type="protein sequence ID" value="AAX63918.1"/>
    <property type="molecule type" value="Genomic_DNA"/>
</dbReference>
<dbReference type="RefSeq" id="WP_001538890.1">
    <property type="nucleotide sequence ID" value="NC_006905.1"/>
</dbReference>
<dbReference type="SMR" id="Q57TP3"/>
<dbReference type="KEGG" id="sec:SCH_0012"/>
<dbReference type="HOGENOM" id="CLU_005965_2_1_6"/>
<dbReference type="Proteomes" id="UP000000538">
    <property type="component" value="Chromosome"/>
</dbReference>
<dbReference type="GO" id="GO:0005524">
    <property type="term" value="F:ATP binding"/>
    <property type="evidence" value="ECO:0007669"/>
    <property type="project" value="UniProtKB-UniRule"/>
</dbReference>
<dbReference type="GO" id="GO:0140662">
    <property type="term" value="F:ATP-dependent protein folding chaperone"/>
    <property type="evidence" value="ECO:0007669"/>
    <property type="project" value="InterPro"/>
</dbReference>
<dbReference type="GO" id="GO:0051082">
    <property type="term" value="F:unfolded protein binding"/>
    <property type="evidence" value="ECO:0007669"/>
    <property type="project" value="InterPro"/>
</dbReference>
<dbReference type="CDD" id="cd10234">
    <property type="entry name" value="ASKHA_NBD_HSP70_DnaK-like"/>
    <property type="match status" value="1"/>
</dbReference>
<dbReference type="FunFam" id="2.60.34.10:FF:000014">
    <property type="entry name" value="Chaperone protein DnaK HSP70"/>
    <property type="match status" value="1"/>
</dbReference>
<dbReference type="FunFam" id="1.20.1270.10:FF:000001">
    <property type="entry name" value="Molecular chaperone DnaK"/>
    <property type="match status" value="1"/>
</dbReference>
<dbReference type="FunFam" id="3.30.420.40:FF:000004">
    <property type="entry name" value="Molecular chaperone DnaK"/>
    <property type="match status" value="1"/>
</dbReference>
<dbReference type="FunFam" id="3.90.640.10:FF:000003">
    <property type="entry name" value="Molecular chaperone DnaK"/>
    <property type="match status" value="1"/>
</dbReference>
<dbReference type="Gene3D" id="1.20.1270.10">
    <property type="match status" value="1"/>
</dbReference>
<dbReference type="Gene3D" id="3.30.420.40">
    <property type="match status" value="2"/>
</dbReference>
<dbReference type="Gene3D" id="3.90.640.10">
    <property type="entry name" value="Actin, Chain A, domain 4"/>
    <property type="match status" value="1"/>
</dbReference>
<dbReference type="Gene3D" id="2.60.34.10">
    <property type="entry name" value="Substrate Binding Domain Of DNAk, Chain A, domain 1"/>
    <property type="match status" value="1"/>
</dbReference>
<dbReference type="HAMAP" id="MF_00332">
    <property type="entry name" value="DnaK"/>
    <property type="match status" value="1"/>
</dbReference>
<dbReference type="InterPro" id="IPR043129">
    <property type="entry name" value="ATPase_NBD"/>
</dbReference>
<dbReference type="InterPro" id="IPR012725">
    <property type="entry name" value="Chaperone_DnaK"/>
</dbReference>
<dbReference type="InterPro" id="IPR018181">
    <property type="entry name" value="Heat_shock_70_CS"/>
</dbReference>
<dbReference type="InterPro" id="IPR029048">
    <property type="entry name" value="HSP70_C_sf"/>
</dbReference>
<dbReference type="InterPro" id="IPR029047">
    <property type="entry name" value="HSP70_peptide-bd_sf"/>
</dbReference>
<dbReference type="InterPro" id="IPR013126">
    <property type="entry name" value="Hsp_70_fam"/>
</dbReference>
<dbReference type="NCBIfam" id="NF001413">
    <property type="entry name" value="PRK00290.1"/>
    <property type="match status" value="1"/>
</dbReference>
<dbReference type="NCBIfam" id="NF003520">
    <property type="entry name" value="PRK05183.1"/>
    <property type="match status" value="1"/>
</dbReference>
<dbReference type="NCBIfam" id="TIGR02350">
    <property type="entry name" value="prok_dnaK"/>
    <property type="match status" value="1"/>
</dbReference>
<dbReference type="PANTHER" id="PTHR19375">
    <property type="entry name" value="HEAT SHOCK PROTEIN 70KDA"/>
    <property type="match status" value="1"/>
</dbReference>
<dbReference type="Pfam" id="PF00012">
    <property type="entry name" value="HSP70"/>
    <property type="match status" value="1"/>
</dbReference>
<dbReference type="PRINTS" id="PR00301">
    <property type="entry name" value="HEATSHOCK70"/>
</dbReference>
<dbReference type="SUPFAM" id="SSF53067">
    <property type="entry name" value="Actin-like ATPase domain"/>
    <property type="match status" value="2"/>
</dbReference>
<dbReference type="SUPFAM" id="SSF100934">
    <property type="entry name" value="Heat shock protein 70kD (HSP70), C-terminal subdomain"/>
    <property type="match status" value="1"/>
</dbReference>
<dbReference type="SUPFAM" id="SSF100920">
    <property type="entry name" value="Heat shock protein 70kD (HSP70), peptide-binding domain"/>
    <property type="match status" value="1"/>
</dbReference>
<dbReference type="PROSITE" id="PS00297">
    <property type="entry name" value="HSP70_1"/>
    <property type="match status" value="1"/>
</dbReference>
<dbReference type="PROSITE" id="PS00329">
    <property type="entry name" value="HSP70_2"/>
    <property type="match status" value="1"/>
</dbReference>
<dbReference type="PROSITE" id="PS01036">
    <property type="entry name" value="HSP70_3"/>
    <property type="match status" value="1"/>
</dbReference>
<keyword id="KW-0067">ATP-binding</keyword>
<keyword id="KW-0143">Chaperone</keyword>
<keyword id="KW-0547">Nucleotide-binding</keyword>
<keyword id="KW-0597">Phosphoprotein</keyword>
<keyword id="KW-0346">Stress response</keyword>
<feature type="chain" id="PRO_0000226006" description="Chaperone protein DnaK">
    <location>
        <begin position="1"/>
        <end position="638"/>
    </location>
</feature>
<feature type="region of interest" description="Disordered" evidence="2">
    <location>
        <begin position="604"/>
        <end position="638"/>
    </location>
</feature>
<feature type="compositionally biased region" description="Low complexity" evidence="2">
    <location>
        <begin position="604"/>
        <end position="620"/>
    </location>
</feature>
<feature type="modified residue" description="Phosphothreonine; by autocatalysis" evidence="1">
    <location>
        <position position="199"/>
    </location>
</feature>
<name>DNAK_SALCH</name>
<gene>
    <name evidence="1" type="primary">dnaK</name>
    <name type="ordered locus">SCH_0012</name>
</gene>
<protein>
    <recommendedName>
        <fullName evidence="1">Chaperone protein DnaK</fullName>
    </recommendedName>
    <alternativeName>
        <fullName evidence="1">HSP70</fullName>
    </alternativeName>
    <alternativeName>
        <fullName evidence="1">Heat shock 70 kDa protein</fullName>
    </alternativeName>
    <alternativeName>
        <fullName evidence="1">Heat shock protein 70</fullName>
    </alternativeName>
</protein>
<comment type="function">
    <text evidence="1">Acts as a chaperone.</text>
</comment>
<comment type="induction">
    <text evidence="1">By stress conditions e.g. heat shock.</text>
</comment>
<comment type="similarity">
    <text evidence="1">Belongs to the heat shock protein 70 family.</text>
</comment>
<evidence type="ECO:0000255" key="1">
    <source>
        <dbReference type="HAMAP-Rule" id="MF_00332"/>
    </source>
</evidence>
<evidence type="ECO:0000256" key="2">
    <source>
        <dbReference type="SAM" id="MobiDB-lite"/>
    </source>
</evidence>
<reference key="1">
    <citation type="journal article" date="2005" name="Nucleic Acids Res.">
        <title>The genome sequence of Salmonella enterica serovar Choleraesuis, a highly invasive and resistant zoonotic pathogen.</title>
        <authorList>
            <person name="Chiu C.-H."/>
            <person name="Tang P."/>
            <person name="Chu C."/>
            <person name="Hu S."/>
            <person name="Bao Q."/>
            <person name="Yu J."/>
            <person name="Chou Y.-Y."/>
            <person name="Wang H.-S."/>
            <person name="Lee Y.-S."/>
        </authorList>
    </citation>
    <scope>NUCLEOTIDE SEQUENCE [LARGE SCALE GENOMIC DNA]</scope>
    <source>
        <strain>SC-B67</strain>
    </source>
</reference>
<organism>
    <name type="scientific">Salmonella choleraesuis (strain SC-B67)</name>
    <dbReference type="NCBI Taxonomy" id="321314"/>
    <lineage>
        <taxon>Bacteria</taxon>
        <taxon>Pseudomonadati</taxon>
        <taxon>Pseudomonadota</taxon>
        <taxon>Gammaproteobacteria</taxon>
        <taxon>Enterobacterales</taxon>
        <taxon>Enterobacteriaceae</taxon>
        <taxon>Salmonella</taxon>
    </lineage>
</organism>
<sequence>MGKIIGIDLGTTNSCVAIMDGTQARVLENAEGDRTTPSIIAYTQDGETLVGQPAKRQAVTNPQNTLFAIKRLIGRRFQDEEVQRDVSIMPYKIIGADNGDAWLDVKGQKMAPPQISAEVLKKMKKTAEDYLGEPVTEAVITVPAYFNDAQRQATKDAGRIAGLEVKRIINEPTAAALAYGLDKEVGNRTIAVYDLGGGTFDISIIEIDEVDGEKTFEVLATNGDTHLGGEDFDTRLINYLVDEFKKDQGIDLRNDPLAMQRLKEAAEKAKIELSSAQQTDVNLPYITADATGPKHMNIKVTRAKLESLVEDLVNRSIEPLKVALQDAGLSVSDINDVILVGGQTRMPMVQKKVAEFFGKEPRKDVNPDEAVAIGAAVQGGVLTGDVKDVLLLDVTPLSLGIETMGGVMTPLITKNTTIPTKHSQVFSTAEDNQSAVTIHVLQGERKRASDNKSLGQFNLDGINPAPRGMPQIEVTFDIDADGILHVSAKDKNSGKEQKITIKASSGLNEEEIQKMVRDAEANAESDRKFEELVQTRNQGDHLLHSTRKQVEEAGDKLPADDKTAIESALNALETALKGEDKAAIEAKMQELAQVSQKLMEIAQQQHAQQQAGSAEASANNAKDDDVVDAEFEEVKDKK</sequence>